<gene>
    <name evidence="1" type="primary">grcA</name>
    <name type="ordered locus">SF2641</name>
    <name type="ordered locus">S2814</name>
</gene>
<name>GRCA_SHIFL</name>
<reference key="1">
    <citation type="journal article" date="2002" name="Nucleic Acids Res.">
        <title>Genome sequence of Shigella flexneri 2a: insights into pathogenicity through comparison with genomes of Escherichia coli K12 and O157.</title>
        <authorList>
            <person name="Jin Q."/>
            <person name="Yuan Z."/>
            <person name="Xu J."/>
            <person name="Wang Y."/>
            <person name="Shen Y."/>
            <person name="Lu W."/>
            <person name="Wang J."/>
            <person name="Liu H."/>
            <person name="Yang J."/>
            <person name="Yang F."/>
            <person name="Zhang X."/>
            <person name="Zhang J."/>
            <person name="Yang G."/>
            <person name="Wu H."/>
            <person name="Qu D."/>
            <person name="Dong J."/>
            <person name="Sun L."/>
            <person name="Xue Y."/>
            <person name="Zhao A."/>
            <person name="Gao Y."/>
            <person name="Zhu J."/>
            <person name="Kan B."/>
            <person name="Ding K."/>
            <person name="Chen S."/>
            <person name="Cheng H."/>
            <person name="Yao Z."/>
            <person name="He B."/>
            <person name="Chen R."/>
            <person name="Ma D."/>
            <person name="Qiang B."/>
            <person name="Wen Y."/>
            <person name="Hou Y."/>
            <person name="Yu J."/>
        </authorList>
    </citation>
    <scope>NUCLEOTIDE SEQUENCE [LARGE SCALE GENOMIC DNA]</scope>
    <source>
        <strain>301 / Serotype 2a</strain>
    </source>
</reference>
<reference key="2">
    <citation type="journal article" date="2003" name="Infect. Immun.">
        <title>Complete genome sequence and comparative genomics of Shigella flexneri serotype 2a strain 2457T.</title>
        <authorList>
            <person name="Wei J."/>
            <person name="Goldberg M.B."/>
            <person name="Burland V."/>
            <person name="Venkatesan M.M."/>
            <person name="Deng W."/>
            <person name="Fournier G."/>
            <person name="Mayhew G.F."/>
            <person name="Plunkett G. III"/>
            <person name="Rose D.J."/>
            <person name="Darling A."/>
            <person name="Mau B."/>
            <person name="Perna N.T."/>
            <person name="Payne S.M."/>
            <person name="Runyen-Janecky L.J."/>
            <person name="Zhou S."/>
            <person name="Schwartz D.C."/>
            <person name="Blattner F.R."/>
        </authorList>
    </citation>
    <scope>NUCLEOTIDE SEQUENCE [LARGE SCALE GENOMIC DNA]</scope>
    <source>
        <strain>ATCC 700930 / 2457T / Serotype 2a</strain>
    </source>
</reference>
<organism>
    <name type="scientific">Shigella flexneri</name>
    <dbReference type="NCBI Taxonomy" id="623"/>
    <lineage>
        <taxon>Bacteria</taxon>
        <taxon>Pseudomonadati</taxon>
        <taxon>Pseudomonadota</taxon>
        <taxon>Gammaproteobacteria</taxon>
        <taxon>Enterobacterales</taxon>
        <taxon>Enterobacteriaceae</taxon>
        <taxon>Shigella</taxon>
    </lineage>
</organism>
<evidence type="ECO:0000255" key="1">
    <source>
        <dbReference type="HAMAP-Rule" id="MF_00806"/>
    </source>
</evidence>
<protein>
    <recommendedName>
        <fullName evidence="1">Autonomous glycyl radical cofactor</fullName>
    </recommendedName>
</protein>
<dbReference type="EMBL" id="AE005674">
    <property type="protein sequence ID" value="AAN44137.2"/>
    <property type="molecule type" value="Genomic_DNA"/>
</dbReference>
<dbReference type="EMBL" id="AE014073">
    <property type="protein sequence ID" value="AAP17961.1"/>
    <property type="molecule type" value="Genomic_DNA"/>
</dbReference>
<dbReference type="RefSeq" id="WP_000627802.1">
    <property type="nucleotide sequence ID" value="NZ_WPGW01000044.1"/>
</dbReference>
<dbReference type="SMR" id="Q83K21"/>
<dbReference type="STRING" id="198214.SF2641"/>
<dbReference type="PaxDb" id="198214-SF2641"/>
<dbReference type="KEGG" id="sfl:SF2641"/>
<dbReference type="KEGG" id="sfx:S2814"/>
<dbReference type="PATRIC" id="fig|198214.7.peg.3151"/>
<dbReference type="HOGENOM" id="CLU_133780_0_0_6"/>
<dbReference type="Proteomes" id="UP000001006">
    <property type="component" value="Chromosome"/>
</dbReference>
<dbReference type="Proteomes" id="UP000002673">
    <property type="component" value="Chromosome"/>
</dbReference>
<dbReference type="GO" id="GO:0005829">
    <property type="term" value="C:cytosol"/>
    <property type="evidence" value="ECO:0007669"/>
    <property type="project" value="TreeGrafter"/>
</dbReference>
<dbReference type="GO" id="GO:0008861">
    <property type="term" value="F:formate C-acetyltransferase activity"/>
    <property type="evidence" value="ECO:0007669"/>
    <property type="project" value="TreeGrafter"/>
</dbReference>
<dbReference type="FunFam" id="3.20.70.20:FF:000002">
    <property type="entry name" value="Autonomous glycyl radical cofactor"/>
    <property type="match status" value="1"/>
</dbReference>
<dbReference type="Gene3D" id="3.20.70.20">
    <property type="match status" value="1"/>
</dbReference>
<dbReference type="HAMAP" id="MF_00806">
    <property type="entry name" value="GrcA"/>
    <property type="match status" value="1"/>
</dbReference>
<dbReference type="InterPro" id="IPR050244">
    <property type="entry name" value="Auton_GlycylRad_Cofactor"/>
</dbReference>
<dbReference type="InterPro" id="IPR019777">
    <property type="entry name" value="Form_AcTrfase_GR_CS"/>
</dbReference>
<dbReference type="InterPro" id="IPR001150">
    <property type="entry name" value="Gly_radical"/>
</dbReference>
<dbReference type="InterPro" id="IPR011140">
    <property type="entry name" value="Glycyl_radical_cofactor_GrcA"/>
</dbReference>
<dbReference type="NCBIfam" id="TIGR04365">
    <property type="entry name" value="spare_glycyl"/>
    <property type="match status" value="1"/>
</dbReference>
<dbReference type="PANTHER" id="PTHR30191">
    <property type="entry name" value="FORMATE ACETYLTRANSFERASE"/>
    <property type="match status" value="1"/>
</dbReference>
<dbReference type="PANTHER" id="PTHR30191:SF0">
    <property type="entry name" value="FORMATE ACETYLTRANSFERASE 1"/>
    <property type="match status" value="1"/>
</dbReference>
<dbReference type="Pfam" id="PF01228">
    <property type="entry name" value="Gly_radical"/>
    <property type="match status" value="1"/>
</dbReference>
<dbReference type="PIRSF" id="PIRSF000378">
    <property type="entry name" value="Gly_radicl_yfiD"/>
    <property type="match status" value="1"/>
</dbReference>
<dbReference type="SUPFAM" id="SSF51998">
    <property type="entry name" value="PFL-like glycyl radical enzymes"/>
    <property type="match status" value="1"/>
</dbReference>
<dbReference type="PROSITE" id="PS00850">
    <property type="entry name" value="GLY_RADICAL_1"/>
    <property type="match status" value="1"/>
</dbReference>
<dbReference type="PROSITE" id="PS51149">
    <property type="entry name" value="GLY_RADICAL_2"/>
    <property type="match status" value="1"/>
</dbReference>
<keyword id="KW-0007">Acetylation</keyword>
<keyword id="KW-0556">Organic radical</keyword>
<keyword id="KW-1185">Reference proteome</keyword>
<proteinExistence type="inferred from homology"/>
<accession>Q83K21</accession>
<accession>Q7UBX2</accession>
<sequence>MITGIQITKAANADLLNSFWLLDSEKGEARCIVAKAGYAEDEVVAVSKLGDIEYREVPVEVKPEVRVEGGQHLNVNVLRRETLEDAVKHPEKYPQLTIRVSGYAVRFNSLTPEQQRDVIARTFTESL</sequence>
<feature type="chain" id="PRO_0000166710" description="Autonomous glycyl radical cofactor">
    <location>
        <begin position="1"/>
        <end position="127"/>
    </location>
</feature>
<feature type="domain" description="Glycine radical" evidence="1">
    <location>
        <begin position="5"/>
        <end position="127"/>
    </location>
</feature>
<feature type="modified residue" description="N6-acetyllysine" evidence="1">
    <location>
        <position position="48"/>
    </location>
</feature>
<feature type="modified residue" description="N6-acetyllysine" evidence="1">
    <location>
        <position position="88"/>
    </location>
</feature>
<feature type="modified residue" description="N6-acetyllysine" evidence="1">
    <location>
        <position position="92"/>
    </location>
</feature>
<feature type="modified residue" description="Glycine radical" evidence="1">
    <location>
        <position position="102"/>
    </location>
</feature>
<comment type="function">
    <text evidence="1">Acts as a radical domain for damaged PFL and possibly other radical proteins.</text>
</comment>